<accession>Q4L800</accession>
<keyword id="KW-0067">ATP-binding</keyword>
<keyword id="KW-0963">Cytoplasm</keyword>
<keyword id="KW-0237">DNA synthesis</keyword>
<keyword id="KW-0418">Kinase</keyword>
<keyword id="KW-0479">Metal-binding</keyword>
<keyword id="KW-0547">Nucleotide-binding</keyword>
<keyword id="KW-0808">Transferase</keyword>
<keyword id="KW-0862">Zinc</keyword>
<dbReference type="EC" id="2.7.1.21" evidence="1"/>
<dbReference type="EMBL" id="AP006716">
    <property type="protein sequence ID" value="BAE04225.1"/>
    <property type="molecule type" value="Genomic_DNA"/>
</dbReference>
<dbReference type="RefSeq" id="WP_011275227.1">
    <property type="nucleotide sequence ID" value="NC_007168.1"/>
</dbReference>
<dbReference type="SMR" id="Q4L800"/>
<dbReference type="KEGG" id="sha:SH0916"/>
<dbReference type="eggNOG" id="COG1435">
    <property type="taxonomic scope" value="Bacteria"/>
</dbReference>
<dbReference type="HOGENOM" id="CLU_064400_3_0_9"/>
<dbReference type="OrthoDB" id="9781579at2"/>
<dbReference type="Proteomes" id="UP000000543">
    <property type="component" value="Chromosome"/>
</dbReference>
<dbReference type="GO" id="GO:0005829">
    <property type="term" value="C:cytosol"/>
    <property type="evidence" value="ECO:0007669"/>
    <property type="project" value="TreeGrafter"/>
</dbReference>
<dbReference type="GO" id="GO:0005524">
    <property type="term" value="F:ATP binding"/>
    <property type="evidence" value="ECO:0007669"/>
    <property type="project" value="UniProtKB-UniRule"/>
</dbReference>
<dbReference type="GO" id="GO:0004797">
    <property type="term" value="F:thymidine kinase activity"/>
    <property type="evidence" value="ECO:0007669"/>
    <property type="project" value="UniProtKB-UniRule"/>
</dbReference>
<dbReference type="GO" id="GO:0008270">
    <property type="term" value="F:zinc ion binding"/>
    <property type="evidence" value="ECO:0007669"/>
    <property type="project" value="UniProtKB-UniRule"/>
</dbReference>
<dbReference type="GO" id="GO:0071897">
    <property type="term" value="P:DNA biosynthetic process"/>
    <property type="evidence" value="ECO:0007669"/>
    <property type="project" value="UniProtKB-KW"/>
</dbReference>
<dbReference type="GO" id="GO:0046104">
    <property type="term" value="P:thymidine metabolic process"/>
    <property type="evidence" value="ECO:0007669"/>
    <property type="project" value="TreeGrafter"/>
</dbReference>
<dbReference type="FunFam" id="3.30.60.20:FF:000026">
    <property type="entry name" value="Thymidine kinase"/>
    <property type="match status" value="1"/>
</dbReference>
<dbReference type="FunFam" id="3.40.50.300:FF:000384">
    <property type="entry name" value="Thymidine kinase"/>
    <property type="match status" value="1"/>
</dbReference>
<dbReference type="Gene3D" id="3.30.60.20">
    <property type="match status" value="1"/>
</dbReference>
<dbReference type="Gene3D" id="3.40.50.300">
    <property type="entry name" value="P-loop containing nucleotide triphosphate hydrolases"/>
    <property type="match status" value="1"/>
</dbReference>
<dbReference type="HAMAP" id="MF_00124">
    <property type="entry name" value="Thymidine_kinase"/>
    <property type="match status" value="1"/>
</dbReference>
<dbReference type="InterPro" id="IPR027417">
    <property type="entry name" value="P-loop_NTPase"/>
</dbReference>
<dbReference type="InterPro" id="IPR001267">
    <property type="entry name" value="Thymidine_kinase"/>
</dbReference>
<dbReference type="InterPro" id="IPR020633">
    <property type="entry name" value="Thymidine_kinase_CS"/>
</dbReference>
<dbReference type="NCBIfam" id="NF003296">
    <property type="entry name" value="PRK04296.1-1"/>
    <property type="match status" value="1"/>
</dbReference>
<dbReference type="PANTHER" id="PTHR11441">
    <property type="entry name" value="THYMIDINE KINASE"/>
    <property type="match status" value="1"/>
</dbReference>
<dbReference type="PANTHER" id="PTHR11441:SF0">
    <property type="entry name" value="THYMIDINE KINASE, CYTOSOLIC"/>
    <property type="match status" value="1"/>
</dbReference>
<dbReference type="Pfam" id="PF00265">
    <property type="entry name" value="TK"/>
    <property type="match status" value="1"/>
</dbReference>
<dbReference type="PIRSF" id="PIRSF035805">
    <property type="entry name" value="TK_cell"/>
    <property type="match status" value="1"/>
</dbReference>
<dbReference type="SUPFAM" id="SSF57716">
    <property type="entry name" value="Glucocorticoid receptor-like (DNA-binding domain)"/>
    <property type="match status" value="1"/>
</dbReference>
<dbReference type="SUPFAM" id="SSF52540">
    <property type="entry name" value="P-loop containing nucleoside triphosphate hydrolases"/>
    <property type="match status" value="1"/>
</dbReference>
<dbReference type="PROSITE" id="PS00603">
    <property type="entry name" value="TK_CELLULAR_TYPE"/>
    <property type="match status" value="1"/>
</dbReference>
<proteinExistence type="inferred from homology"/>
<evidence type="ECO:0000255" key="1">
    <source>
        <dbReference type="HAMAP-Rule" id="MF_00124"/>
    </source>
</evidence>
<sequence length="199" mass="22358">MYETYHSGWIECITGSMFSGKSEELIRRLRRGIYAKQKVVVFKPAIDDRYHKEKVVSHDGNELEAINISTSRDILLQDLSHVDVIGIDEIQFFDKEIVNIVEKLAENGHRVVVAGLDMDFRGEPFEPMPQIMAVSEQVTKLQAVCAVCGSSSSRTQRLIDGQPAKVDDPIILVGANESYEPRCRAHHIVAPSTSDEEEM</sequence>
<gene>
    <name evidence="1" type="primary">tdk</name>
    <name type="ordered locus">SH0916</name>
</gene>
<organism>
    <name type="scientific">Staphylococcus haemolyticus (strain JCSC1435)</name>
    <dbReference type="NCBI Taxonomy" id="279808"/>
    <lineage>
        <taxon>Bacteria</taxon>
        <taxon>Bacillati</taxon>
        <taxon>Bacillota</taxon>
        <taxon>Bacilli</taxon>
        <taxon>Bacillales</taxon>
        <taxon>Staphylococcaceae</taxon>
        <taxon>Staphylococcus</taxon>
    </lineage>
</organism>
<name>KITH_STAHJ</name>
<reference key="1">
    <citation type="journal article" date="2005" name="J. Bacteriol.">
        <title>Whole-genome sequencing of Staphylococcus haemolyticus uncovers the extreme plasticity of its genome and the evolution of human-colonizing staphylococcal species.</title>
        <authorList>
            <person name="Takeuchi F."/>
            <person name="Watanabe S."/>
            <person name="Baba T."/>
            <person name="Yuzawa H."/>
            <person name="Ito T."/>
            <person name="Morimoto Y."/>
            <person name="Kuroda M."/>
            <person name="Cui L."/>
            <person name="Takahashi M."/>
            <person name="Ankai A."/>
            <person name="Baba S."/>
            <person name="Fukui S."/>
            <person name="Lee J.C."/>
            <person name="Hiramatsu K."/>
        </authorList>
    </citation>
    <scope>NUCLEOTIDE SEQUENCE [LARGE SCALE GENOMIC DNA]</scope>
    <source>
        <strain>JCSC1435</strain>
    </source>
</reference>
<comment type="catalytic activity">
    <reaction evidence="1">
        <text>thymidine + ATP = dTMP + ADP + H(+)</text>
        <dbReference type="Rhea" id="RHEA:19129"/>
        <dbReference type="ChEBI" id="CHEBI:15378"/>
        <dbReference type="ChEBI" id="CHEBI:17748"/>
        <dbReference type="ChEBI" id="CHEBI:30616"/>
        <dbReference type="ChEBI" id="CHEBI:63528"/>
        <dbReference type="ChEBI" id="CHEBI:456216"/>
        <dbReference type="EC" id="2.7.1.21"/>
    </reaction>
</comment>
<comment type="subunit">
    <text evidence="1">Homotetramer.</text>
</comment>
<comment type="subcellular location">
    <subcellularLocation>
        <location evidence="1">Cytoplasm</location>
    </subcellularLocation>
</comment>
<comment type="similarity">
    <text evidence="1">Belongs to the thymidine kinase family.</text>
</comment>
<feature type="chain" id="PRO_0000242808" description="Thymidine kinase">
    <location>
        <begin position="1"/>
        <end position="199"/>
    </location>
</feature>
<feature type="active site" description="Proton acceptor" evidence="1">
    <location>
        <position position="89"/>
    </location>
</feature>
<feature type="binding site" evidence="1">
    <location>
        <begin position="15"/>
        <end position="22"/>
    </location>
    <ligand>
        <name>ATP</name>
        <dbReference type="ChEBI" id="CHEBI:30616"/>
    </ligand>
</feature>
<feature type="binding site" evidence="1">
    <location>
        <begin position="88"/>
        <end position="91"/>
    </location>
    <ligand>
        <name>ATP</name>
        <dbReference type="ChEBI" id="CHEBI:30616"/>
    </ligand>
</feature>
<feature type="binding site" evidence="1">
    <location>
        <position position="145"/>
    </location>
    <ligand>
        <name>Zn(2+)</name>
        <dbReference type="ChEBI" id="CHEBI:29105"/>
    </ligand>
</feature>
<feature type="binding site" evidence="1">
    <location>
        <position position="148"/>
    </location>
    <ligand>
        <name>Zn(2+)</name>
        <dbReference type="ChEBI" id="CHEBI:29105"/>
    </ligand>
</feature>
<feature type="binding site" evidence="1">
    <location>
        <position position="183"/>
    </location>
    <ligand>
        <name>Zn(2+)</name>
        <dbReference type="ChEBI" id="CHEBI:29105"/>
    </ligand>
</feature>
<feature type="binding site" evidence="1">
    <location>
        <position position="186"/>
    </location>
    <ligand>
        <name>Zn(2+)</name>
        <dbReference type="ChEBI" id="CHEBI:29105"/>
    </ligand>
</feature>
<protein>
    <recommendedName>
        <fullName evidence="1">Thymidine kinase</fullName>
        <ecNumber evidence="1">2.7.1.21</ecNumber>
    </recommendedName>
</protein>